<keyword id="KW-0963">Cytoplasm</keyword>
<keyword id="KW-0378">Hydrolase</keyword>
<keyword id="KW-0460">Magnesium</keyword>
<keyword id="KW-0479">Metal-binding</keyword>
<keyword id="KW-1185">Reference proteome</keyword>
<sequence length="216" mass="24916">MSEEAYEETQESSQSPRPVPKLNERILSTLSRRSVAAHPWHDLEIGPEAPLVFNVVVEITKGSKVKYELDKKTGLIKVDRILYSSVVYPHNYGFIPRTLCEDNDPLDVLVLMQEPVLPGCFLRARAIGLMPMIDQGEKDDKIIAVCADDPEYKHFTDIKQLAPHRLQEIRRFFEDYKKNENKKVAVNDFLPSESAHEAIQYSMDLYAEYILHTLRR</sequence>
<gene>
    <name evidence="6" type="primary">PPA3</name>
    <name evidence="9" type="ordered locus">At2g46860</name>
    <name evidence="10" type="ORF">F19D11.23</name>
</gene>
<dbReference type="EC" id="3.6.1.1" evidence="4"/>
<dbReference type="EMBL" id="AC004411">
    <property type="protein sequence ID" value="AAC34242.1"/>
    <property type="molecule type" value="Genomic_DNA"/>
</dbReference>
<dbReference type="EMBL" id="AC005310">
    <property type="protein sequence ID" value="AAM15021.1"/>
    <property type="molecule type" value="Genomic_DNA"/>
</dbReference>
<dbReference type="EMBL" id="CP002685">
    <property type="protein sequence ID" value="AEC10764.1"/>
    <property type="molecule type" value="Genomic_DNA"/>
</dbReference>
<dbReference type="EMBL" id="AK118094">
    <property type="protein sequence ID" value="BAC42722.1"/>
    <property type="molecule type" value="mRNA"/>
</dbReference>
<dbReference type="EMBL" id="BT025278">
    <property type="protein sequence ID" value="ABF19031.1"/>
    <property type="molecule type" value="mRNA"/>
</dbReference>
<dbReference type="PIR" id="T02201">
    <property type="entry name" value="T02201"/>
</dbReference>
<dbReference type="RefSeq" id="NP_182209.1">
    <property type="nucleotide sequence ID" value="NM_130253.3"/>
</dbReference>
<dbReference type="SMR" id="O82793"/>
<dbReference type="FunCoup" id="O82793">
    <property type="interactions" value="56"/>
</dbReference>
<dbReference type="STRING" id="3702.O82793"/>
<dbReference type="iPTMnet" id="O82793"/>
<dbReference type="PaxDb" id="3702-AT2G46860.1"/>
<dbReference type="ProteomicsDB" id="248489"/>
<dbReference type="EnsemblPlants" id="AT2G46860.1">
    <property type="protein sequence ID" value="AT2G46860.1"/>
    <property type="gene ID" value="AT2G46860"/>
</dbReference>
<dbReference type="GeneID" id="819299"/>
<dbReference type="Gramene" id="AT2G46860.1">
    <property type="protein sequence ID" value="AT2G46860.1"/>
    <property type="gene ID" value="AT2G46860"/>
</dbReference>
<dbReference type="KEGG" id="ath:AT2G46860"/>
<dbReference type="Araport" id="AT2G46860"/>
<dbReference type="TAIR" id="AT2G46860">
    <property type="gene designation" value="PPA3"/>
</dbReference>
<dbReference type="eggNOG" id="KOG1626">
    <property type="taxonomic scope" value="Eukaryota"/>
</dbReference>
<dbReference type="HOGENOM" id="CLU_073198_2_1_1"/>
<dbReference type="InParanoid" id="O82793"/>
<dbReference type="OMA" id="GIMPMID"/>
<dbReference type="OrthoDB" id="1608002at2759"/>
<dbReference type="PhylomeDB" id="O82793"/>
<dbReference type="PRO" id="PR:O82793"/>
<dbReference type="Proteomes" id="UP000006548">
    <property type="component" value="Chromosome 2"/>
</dbReference>
<dbReference type="ExpressionAtlas" id="O82793">
    <property type="expression patterns" value="baseline and differential"/>
</dbReference>
<dbReference type="GO" id="GO:0005829">
    <property type="term" value="C:cytosol"/>
    <property type="evidence" value="ECO:0000314"/>
    <property type="project" value="TAIR"/>
</dbReference>
<dbReference type="GO" id="GO:0005654">
    <property type="term" value="C:nucleoplasm"/>
    <property type="evidence" value="ECO:0000314"/>
    <property type="project" value="TAIR"/>
</dbReference>
<dbReference type="GO" id="GO:0004427">
    <property type="term" value="F:inorganic diphosphate phosphatase activity"/>
    <property type="evidence" value="ECO:0000303"/>
    <property type="project" value="TAIR"/>
</dbReference>
<dbReference type="GO" id="GO:0000287">
    <property type="term" value="F:magnesium ion binding"/>
    <property type="evidence" value="ECO:0007669"/>
    <property type="project" value="InterPro"/>
</dbReference>
<dbReference type="GO" id="GO:0006796">
    <property type="term" value="P:phosphate-containing compound metabolic process"/>
    <property type="evidence" value="ECO:0007669"/>
    <property type="project" value="InterPro"/>
</dbReference>
<dbReference type="CDD" id="cd00412">
    <property type="entry name" value="pyrophosphatase"/>
    <property type="match status" value="1"/>
</dbReference>
<dbReference type="FunFam" id="3.90.80.10:FF:000002">
    <property type="entry name" value="Soluble inorganic pyrophosphatase 4"/>
    <property type="match status" value="1"/>
</dbReference>
<dbReference type="Gene3D" id="3.90.80.10">
    <property type="entry name" value="Inorganic pyrophosphatase"/>
    <property type="match status" value="1"/>
</dbReference>
<dbReference type="HAMAP" id="MF_00209">
    <property type="entry name" value="Inorganic_PPase"/>
    <property type="match status" value="1"/>
</dbReference>
<dbReference type="InterPro" id="IPR008162">
    <property type="entry name" value="Pyrophosphatase"/>
</dbReference>
<dbReference type="InterPro" id="IPR036649">
    <property type="entry name" value="Pyrophosphatase_sf"/>
</dbReference>
<dbReference type="PANTHER" id="PTHR10286">
    <property type="entry name" value="INORGANIC PYROPHOSPHATASE"/>
    <property type="match status" value="1"/>
</dbReference>
<dbReference type="Pfam" id="PF00719">
    <property type="entry name" value="Pyrophosphatase"/>
    <property type="match status" value="1"/>
</dbReference>
<dbReference type="SUPFAM" id="SSF50324">
    <property type="entry name" value="Inorganic pyrophosphatase"/>
    <property type="match status" value="1"/>
</dbReference>
<dbReference type="PROSITE" id="PS00387">
    <property type="entry name" value="PPASE"/>
    <property type="match status" value="1"/>
</dbReference>
<proteinExistence type="evidence at transcript level"/>
<feature type="chain" id="PRO_0000431796" description="Soluble inorganic pyrophosphatase 3">
    <location>
        <begin position="1"/>
        <end position="216"/>
    </location>
</feature>
<feature type="region of interest" description="Disordered" evidence="5">
    <location>
        <begin position="1"/>
        <end position="21"/>
    </location>
</feature>
<feature type="compositionally biased region" description="Acidic residues" evidence="5">
    <location>
        <begin position="1"/>
        <end position="10"/>
    </location>
</feature>
<feature type="active site" description="Proton donor" evidence="1">
    <location>
        <position position="88"/>
    </location>
</feature>
<feature type="binding site" evidence="3">
    <location>
        <position position="66"/>
    </location>
    <ligand>
        <name>substrate</name>
    </ligand>
</feature>
<feature type="binding site" evidence="3">
    <location>
        <position position="80"/>
    </location>
    <ligand>
        <name>substrate</name>
    </ligand>
</feature>
<feature type="binding site" evidence="3">
    <location>
        <position position="92"/>
    </location>
    <ligand>
        <name>substrate</name>
    </ligand>
</feature>
<feature type="binding site" evidence="2">
    <location>
        <position position="102"/>
    </location>
    <ligand>
        <name>Mg(2+)</name>
        <dbReference type="ChEBI" id="CHEBI:18420"/>
        <label>1</label>
    </ligand>
</feature>
<feature type="binding site" evidence="2">
    <location>
        <position position="107"/>
    </location>
    <ligand>
        <name>Mg(2+)</name>
        <dbReference type="ChEBI" id="CHEBI:18420"/>
        <label>1</label>
    </ligand>
</feature>
<feature type="binding site" evidence="2">
    <location>
        <position position="107"/>
    </location>
    <ligand>
        <name>Mg(2+)</name>
        <dbReference type="ChEBI" id="CHEBI:18420"/>
        <label>2</label>
    </ligand>
</feature>
<feature type="binding site" evidence="2">
    <location>
        <position position="139"/>
    </location>
    <ligand>
        <name>Mg(2+)</name>
        <dbReference type="ChEBI" id="CHEBI:18420"/>
        <label>1</label>
    </ligand>
</feature>
<feature type="binding site" evidence="3">
    <location>
        <position position="176"/>
    </location>
    <ligand>
        <name>substrate</name>
    </ligand>
</feature>
<feature type="sequence conflict" description="In Ref. 3; BAC42722." evidence="8" ref="3">
    <original>D</original>
    <variation>N</variation>
    <location>
        <position position="175"/>
    </location>
</feature>
<comment type="catalytic activity">
    <reaction evidence="4">
        <text>diphosphate + H2O = 2 phosphate + H(+)</text>
        <dbReference type="Rhea" id="RHEA:24576"/>
        <dbReference type="ChEBI" id="CHEBI:15377"/>
        <dbReference type="ChEBI" id="CHEBI:15378"/>
        <dbReference type="ChEBI" id="CHEBI:33019"/>
        <dbReference type="ChEBI" id="CHEBI:43474"/>
        <dbReference type="EC" id="3.6.1.1"/>
    </reaction>
</comment>
<comment type="cofactor">
    <cofactor evidence="4">
        <name>Mg(2+)</name>
        <dbReference type="ChEBI" id="CHEBI:18420"/>
    </cofactor>
</comment>
<comment type="subcellular location">
    <subcellularLocation>
        <location evidence="4">Cytoplasm</location>
    </subcellularLocation>
</comment>
<comment type="tissue specificity">
    <text evidence="7">Expressed preferentially in stamen, pollen and flower, and at a low level in lateral roots and root elongation zones.</text>
</comment>
<comment type="similarity">
    <text evidence="8">Belongs to the PPase family.</text>
</comment>
<protein>
    <recommendedName>
        <fullName evidence="6">Soluble inorganic pyrophosphatase 3</fullName>
        <ecNumber evidence="4">3.6.1.1</ecNumber>
    </recommendedName>
    <alternativeName>
        <fullName evidence="6">Pyrophosphate phospho-hydrolase 3</fullName>
        <shortName evidence="6">PPase 3</shortName>
    </alternativeName>
</protein>
<accession>O82793</accession>
<accession>Q8GXR0</accession>
<organism evidence="11">
    <name type="scientific">Arabidopsis thaliana</name>
    <name type="common">Mouse-ear cress</name>
    <dbReference type="NCBI Taxonomy" id="3702"/>
    <lineage>
        <taxon>Eukaryota</taxon>
        <taxon>Viridiplantae</taxon>
        <taxon>Streptophyta</taxon>
        <taxon>Embryophyta</taxon>
        <taxon>Tracheophyta</taxon>
        <taxon>Spermatophyta</taxon>
        <taxon>Magnoliopsida</taxon>
        <taxon>eudicotyledons</taxon>
        <taxon>Gunneridae</taxon>
        <taxon>Pentapetalae</taxon>
        <taxon>rosids</taxon>
        <taxon>malvids</taxon>
        <taxon>Brassicales</taxon>
        <taxon>Brassicaceae</taxon>
        <taxon>Camelineae</taxon>
        <taxon>Arabidopsis</taxon>
    </lineage>
</organism>
<reference key="1">
    <citation type="journal article" date="1999" name="Nature">
        <title>Sequence and analysis of chromosome 2 of the plant Arabidopsis thaliana.</title>
        <authorList>
            <person name="Lin X."/>
            <person name="Kaul S."/>
            <person name="Rounsley S.D."/>
            <person name="Shea T.P."/>
            <person name="Benito M.-I."/>
            <person name="Town C.D."/>
            <person name="Fujii C.Y."/>
            <person name="Mason T.M."/>
            <person name="Bowman C.L."/>
            <person name="Barnstead M.E."/>
            <person name="Feldblyum T.V."/>
            <person name="Buell C.R."/>
            <person name="Ketchum K.A."/>
            <person name="Lee J.J."/>
            <person name="Ronning C.M."/>
            <person name="Koo H.L."/>
            <person name="Moffat K.S."/>
            <person name="Cronin L.A."/>
            <person name="Shen M."/>
            <person name="Pai G."/>
            <person name="Van Aken S."/>
            <person name="Umayam L."/>
            <person name="Tallon L.J."/>
            <person name="Gill J.E."/>
            <person name="Adams M.D."/>
            <person name="Carrera A.J."/>
            <person name="Creasy T.H."/>
            <person name="Goodman H.M."/>
            <person name="Somerville C.R."/>
            <person name="Copenhaver G.P."/>
            <person name="Preuss D."/>
            <person name="Nierman W.C."/>
            <person name="White O."/>
            <person name="Eisen J.A."/>
            <person name="Salzberg S.L."/>
            <person name="Fraser C.M."/>
            <person name="Venter J.C."/>
        </authorList>
    </citation>
    <scope>NUCLEOTIDE SEQUENCE [LARGE SCALE GENOMIC DNA]</scope>
    <source>
        <strain>cv. Columbia</strain>
    </source>
</reference>
<reference key="2">
    <citation type="journal article" date="2017" name="Plant J.">
        <title>Araport11: a complete reannotation of the Arabidopsis thaliana reference genome.</title>
        <authorList>
            <person name="Cheng C.Y."/>
            <person name="Krishnakumar V."/>
            <person name="Chan A.P."/>
            <person name="Thibaud-Nissen F."/>
            <person name="Schobel S."/>
            <person name="Town C.D."/>
        </authorList>
    </citation>
    <scope>GENOME REANNOTATION</scope>
    <source>
        <strain>cv. Columbia</strain>
    </source>
</reference>
<reference key="3">
    <citation type="journal article" date="2002" name="Science">
        <title>Functional annotation of a full-length Arabidopsis cDNA collection.</title>
        <authorList>
            <person name="Seki M."/>
            <person name="Narusaka M."/>
            <person name="Kamiya A."/>
            <person name="Ishida J."/>
            <person name="Satou M."/>
            <person name="Sakurai T."/>
            <person name="Nakajima M."/>
            <person name="Enju A."/>
            <person name="Akiyama K."/>
            <person name="Oono Y."/>
            <person name="Muramatsu M."/>
            <person name="Hayashizaki Y."/>
            <person name="Kawai J."/>
            <person name="Carninci P."/>
            <person name="Itoh M."/>
            <person name="Ishii Y."/>
            <person name="Arakawa T."/>
            <person name="Shibata K."/>
            <person name="Shinagawa A."/>
            <person name="Shinozaki K."/>
        </authorList>
    </citation>
    <scope>NUCLEOTIDE SEQUENCE [LARGE SCALE MRNA]</scope>
    <source>
        <strain>cv. Columbia</strain>
    </source>
</reference>
<reference key="4">
    <citation type="submission" date="2006-04" db="EMBL/GenBank/DDBJ databases">
        <title>Arabidopsis ORF clones.</title>
        <authorList>
            <person name="Shinn P."/>
            <person name="Chen H."/>
            <person name="Kim C.J."/>
            <person name="Ecker J.R."/>
        </authorList>
    </citation>
    <scope>NUCLEOTIDE SEQUENCE [LARGE SCALE MRNA]</scope>
</reference>
<reference key="5">
    <citation type="journal article" date="1999" name="FEBS Lett.">
        <title>Evolutionary aspects of inorganic pyrophosphatase.</title>
        <authorList>
            <person name="Sivula T."/>
            <person name="Salminen A."/>
            <person name="Parfenyev A.N."/>
            <person name="Pohjanjoki P."/>
            <person name="Goldman A."/>
            <person name="Cooperman B.S."/>
            <person name="Baykov A.A."/>
            <person name="Lahti R."/>
        </authorList>
    </citation>
    <scope>3D-STRUCTURE MODELING</scope>
</reference>
<reference key="6">
    <citation type="journal article" date="2004" name="FEBS Lett.">
        <title>Identification of an Arabidopsis inorganic pyrophosphatase capable of being imported into chloroplasts.</title>
        <authorList>
            <person name="Schulze S."/>
            <person name="Mant A."/>
            <person name="Kossmann J."/>
            <person name="Lloyd J.R."/>
        </authorList>
    </citation>
    <scope>GENE FAMILY</scope>
    <scope>NOMENCLATURE</scope>
</reference>
<reference key="7">
    <citation type="journal article" date="2007" name="Plant Sci.">
        <title>Characterization of two soluble inorganic pyrophosphatases from Arabidopsis thaliana.</title>
        <authorList>
            <person name="Navarro-De la Sancha E."/>
            <person name="Coello-Coutino M.P."/>
            <person name="Valencia-Turcotte L.G."/>
            <person name="Hernandez-Dominguez E.E."/>
            <person name="Trejo-Yepes G."/>
            <person name="Rodriguez-Sotres R."/>
        </authorList>
    </citation>
    <scope>TISSUE SPECIFICITY</scope>
    <source>
        <strain>cv. Columbia</strain>
    </source>
</reference>
<name>IPYR3_ARATH</name>
<evidence type="ECO:0000250" key="1">
    <source>
        <dbReference type="UniProtKB" id="P00817"/>
    </source>
</evidence>
<evidence type="ECO:0000250" key="2">
    <source>
        <dbReference type="UniProtKB" id="P0A7A9"/>
    </source>
</evidence>
<evidence type="ECO:0000250" key="3">
    <source>
        <dbReference type="UniProtKB" id="P9WI55"/>
    </source>
</evidence>
<evidence type="ECO:0000250" key="4">
    <source>
        <dbReference type="UniProtKB" id="Q93V56"/>
    </source>
</evidence>
<evidence type="ECO:0000256" key="5">
    <source>
        <dbReference type="SAM" id="MobiDB-lite"/>
    </source>
</evidence>
<evidence type="ECO:0000303" key="6">
    <source>
    </source>
</evidence>
<evidence type="ECO:0000303" key="7">
    <source ref="7"/>
</evidence>
<evidence type="ECO:0000305" key="8"/>
<evidence type="ECO:0000312" key="9">
    <source>
        <dbReference type="Araport" id="AT2G46860"/>
    </source>
</evidence>
<evidence type="ECO:0000312" key="10">
    <source>
        <dbReference type="EMBL" id="AAM15021.1"/>
    </source>
</evidence>
<evidence type="ECO:0000312" key="11">
    <source>
        <dbReference type="Proteomes" id="UP000006548"/>
    </source>
</evidence>